<organismHost>
    <name type="scientific">Aves</name>
    <dbReference type="NCBI Taxonomy" id="8782"/>
</organismHost>
<organismHost>
    <name type="scientific">Equus caballus</name>
    <name type="common">Horse</name>
    <dbReference type="NCBI Taxonomy" id="9796"/>
</organismHost>
<accession>Q08II4</accession>
<comment type="function">
    <text evidence="1">Plays an important role in promoting lung pathology in both primary viral infection and secondary bacterial infection. Promotes alteration of mitochondrial morphology, dissipation of mitochondrial membrane potential, and cell death. Alternatively, inhibits the production of interferon in the infected cell at the level of host mitochondrial antiviral signaling MAVS. Its level of expression differs greatly depending on which cell type is infected, in a manner that is independent of the levels of expression of other viral proteins. Monocytic cells are more affected than epithelial cells. Seems to disable virus-infected monocytes or other host innate immune cells. During early stage of infection, predisposes the mitochondria to permeability transition through interaction with host SLC25A6/ANT3 and VDAC1. These proteins participate in the formation of the permeability transition pore complex (PTPC) responsible of the release of mitochondrial products that triggers apoptosis.</text>
</comment>
<comment type="subunit">
    <text evidence="1">Oligomer. Interacts with human SLC25A6/ANT3 and VDAC1. Interacts with host MAVS.</text>
</comment>
<comment type="subcellular location">
    <subcellularLocation>
        <location evidence="1">Host mitochondrion inner membrane</location>
    </subcellularLocation>
    <subcellularLocation>
        <location evidence="1">Host nucleus</location>
    </subcellularLocation>
    <subcellularLocation>
        <location evidence="1">Host cytoplasm</location>
        <location evidence="1">Host cytosol</location>
    </subcellularLocation>
    <text evidence="1">Inner mitochondrial membrane in most cells types. Otherwise is detected in the nucleus and cytosol.</text>
</comment>
<comment type="miscellaneous">
    <text>Is not encoded in all strains, and seems to be dispensable for replication.</text>
</comment>
<comment type="similarity">
    <text evidence="1">Belongs to the influenza viruses PB1-F2 family.</text>
</comment>
<protein>
    <recommendedName>
        <fullName evidence="1">Protein PB1-F2</fullName>
    </recommendedName>
</protein>
<proteinExistence type="inferred from homology"/>
<keyword id="KW-0053">Apoptosis</keyword>
<keyword id="KW-1035">Host cytoplasm</keyword>
<keyword id="KW-1043">Host membrane</keyword>
<keyword id="KW-1045">Host mitochondrion</keyword>
<keyword id="KW-1046">Host mitochondrion inner membrane</keyword>
<keyword id="KW-1048">Host nucleus</keyword>
<keyword id="KW-0945">Host-virus interaction</keyword>
<keyword id="KW-1090">Inhibition of host innate immune response by virus</keyword>
<keyword id="KW-1097">Inhibition of host MAVS by virus</keyword>
<keyword id="KW-1113">Inhibition of host RLR pathway by virus</keyword>
<keyword id="KW-0472">Membrane</keyword>
<keyword id="KW-1119">Modulation of host cell apoptosis by virus</keyword>
<keyword id="KW-0899">Viral immunoevasion</keyword>
<sequence>MEQEQDTPWIQSTEHTNIQKRESGQQTQRLEHPSLTRLMDPYPRTMNRADTHKQIVSWRQWLSLKNPTQGSLKTRVSKRWKLFSKQEWTN</sequence>
<dbReference type="EMBL" id="AB274964">
    <property type="protein sequence ID" value="BAF32966.1"/>
    <property type="molecule type" value="Genomic_RNA"/>
</dbReference>
<dbReference type="SMR" id="Q08II4"/>
<dbReference type="Proteomes" id="UP000008578">
    <property type="component" value="Genome"/>
</dbReference>
<dbReference type="GO" id="GO:0044164">
    <property type="term" value="C:host cell cytosol"/>
    <property type="evidence" value="ECO:0007669"/>
    <property type="project" value="UniProtKB-SubCell"/>
</dbReference>
<dbReference type="GO" id="GO:0044192">
    <property type="term" value="C:host cell mitochondrial inner membrane"/>
    <property type="evidence" value="ECO:0007669"/>
    <property type="project" value="UniProtKB-SubCell"/>
</dbReference>
<dbReference type="GO" id="GO:0042025">
    <property type="term" value="C:host cell nucleus"/>
    <property type="evidence" value="ECO:0007669"/>
    <property type="project" value="UniProtKB-SubCell"/>
</dbReference>
<dbReference type="GO" id="GO:0016020">
    <property type="term" value="C:membrane"/>
    <property type="evidence" value="ECO:0007669"/>
    <property type="project" value="UniProtKB-UniRule"/>
</dbReference>
<dbReference type="GO" id="GO:0052150">
    <property type="term" value="P:symbiont-mediated perturbation of host apoptosis"/>
    <property type="evidence" value="ECO:0007669"/>
    <property type="project" value="UniProtKB-KW"/>
</dbReference>
<dbReference type="GO" id="GO:0039545">
    <property type="term" value="P:symbiont-mediated suppression of host cytoplasmic pattern recognition receptor signaling pathway via inhibition of MAVS activity"/>
    <property type="evidence" value="ECO:0007669"/>
    <property type="project" value="UniProtKB-KW"/>
</dbReference>
<dbReference type="HAMAP" id="MF_04064">
    <property type="entry name" value="INFV_PB1F2"/>
    <property type="match status" value="1"/>
</dbReference>
<dbReference type="InterPro" id="IPR021045">
    <property type="entry name" value="Flu_proapoptotic_PB1-F2"/>
</dbReference>
<dbReference type="Pfam" id="PF11986">
    <property type="entry name" value="PB1-F2"/>
    <property type="match status" value="1"/>
</dbReference>
<gene>
    <name evidence="1" type="primary">PB1</name>
</gene>
<name>PB1F2_I80A6</name>
<reference key="1">
    <citation type="submission" date="2006-09" db="EMBL/GenBank/DDBJ databases">
        <title>Evolutionary characterization of H3N8 viruses isolated from ducks in Hokkaido.</title>
        <authorList>
            <person name="Kida H."/>
            <person name="Sakoda Y."/>
        </authorList>
    </citation>
    <scope>NUCLEOTIDE SEQUENCE [GENOMIC RNA]</scope>
</reference>
<feature type="chain" id="PRO_0000278709" description="Protein PB1-F2">
    <location>
        <begin position="1"/>
        <end position="90"/>
    </location>
</feature>
<feature type="region of interest" description="Disordered" evidence="2">
    <location>
        <begin position="1"/>
        <end position="45"/>
    </location>
</feature>
<feature type="region of interest" description="Mitochondrial targeting sequence" evidence="1">
    <location>
        <begin position="65"/>
        <end position="87"/>
    </location>
</feature>
<feature type="compositionally biased region" description="Polar residues" evidence="2">
    <location>
        <begin position="1"/>
        <end position="16"/>
    </location>
</feature>
<feature type="compositionally biased region" description="Basic and acidic residues" evidence="2">
    <location>
        <begin position="17"/>
        <end position="34"/>
    </location>
</feature>
<feature type="site" description="Low pathogenicity" evidence="1">
    <location>
        <position position="66"/>
    </location>
</feature>
<evidence type="ECO:0000255" key="1">
    <source>
        <dbReference type="HAMAP-Rule" id="MF_04064"/>
    </source>
</evidence>
<evidence type="ECO:0000256" key="2">
    <source>
        <dbReference type="SAM" id="MobiDB-lite"/>
    </source>
</evidence>
<organism>
    <name type="scientific">Influenza A virus (strain A/Duck/Hokkaido/8/1980 H3N8)</name>
    <dbReference type="NCBI Taxonomy" id="387207"/>
    <lineage>
        <taxon>Viruses</taxon>
        <taxon>Riboviria</taxon>
        <taxon>Orthornavirae</taxon>
        <taxon>Negarnaviricota</taxon>
        <taxon>Polyploviricotina</taxon>
        <taxon>Insthoviricetes</taxon>
        <taxon>Articulavirales</taxon>
        <taxon>Orthomyxoviridae</taxon>
        <taxon>Alphainfluenzavirus</taxon>
        <taxon>Alphainfluenzavirus influenzae</taxon>
        <taxon>Influenza A virus</taxon>
    </lineage>
</organism>